<feature type="chain" id="PRO_0000248502" description="Chymotrypsin inhibitor">
    <location>
        <begin position="1"/>
        <end position="22" status="greater than"/>
    </location>
</feature>
<feature type="region of interest" description="Disordered" evidence="1">
    <location>
        <begin position="1"/>
        <end position="22"/>
    </location>
</feature>
<feature type="non-terminal residue" evidence="3">
    <location>
        <position position="22"/>
    </location>
</feature>
<proteinExistence type="evidence at protein level"/>
<protein>
    <recommendedName>
        <fullName>Chymotrypsin inhibitor</fullName>
    </recommendedName>
    <alternativeName>
        <fullName>MCI</fullName>
    </alternativeName>
</protein>
<accession>P82108</accession>
<evidence type="ECO:0000256" key="1">
    <source>
        <dbReference type="SAM" id="MobiDB-lite"/>
    </source>
</evidence>
<evidence type="ECO:0000269" key="2">
    <source>
    </source>
</evidence>
<evidence type="ECO:0000303" key="3">
    <source>
    </source>
</evidence>
<evidence type="ECO:0000305" key="4"/>
<sequence length="22" mass="2405">FDESFGFQGPSTYEKTPLGEPA</sequence>
<comment type="function">
    <text evidence="2">Inhibits chymotrypsin stoichiometrically. Also inhibits porcine pancreatic elastase and trypsin.</text>
</comment>
<comment type="subcellular location">
    <subcellularLocation>
        <location evidence="2">Secreted</location>
        <location evidence="2">Extracellular space</location>
    </subcellularLocation>
</comment>
<comment type="tissue specificity">
    <text>Hemolymph.</text>
</comment>
<name>MCI_MYTUN</name>
<dbReference type="GO" id="GO:0005576">
    <property type="term" value="C:extracellular region"/>
    <property type="evidence" value="ECO:0007669"/>
    <property type="project" value="UniProtKB-SubCell"/>
</dbReference>
<dbReference type="GO" id="GO:0004867">
    <property type="term" value="F:serine-type endopeptidase inhibitor activity"/>
    <property type="evidence" value="ECO:0007669"/>
    <property type="project" value="UniProtKB-KW"/>
</dbReference>
<reference evidence="4" key="1">
    <citation type="journal article" date="2001" name="Insect Biochem. Mol. Biol.">
        <title>Purification and characterization of two serine protease inhibitors from the hemolymph of Mythimna unipuncta.</title>
        <authorList>
            <person name="Cherqui A."/>
            <person name="Cruz N."/>
            <person name="Simoes N."/>
        </authorList>
    </citation>
    <scope>PROTEIN SEQUENCE</scope>
    <scope>FUNCTION</scope>
    <scope>SUBCELLULAR LOCATION</scope>
    <source>
        <tissue evidence="2">Larval hemolymph</tissue>
    </source>
</reference>
<organism>
    <name type="scientific">Mythimna unipuncta</name>
    <name type="common">Armyworm moth</name>
    <name type="synonym">Pseudaletia unipuncta</name>
    <dbReference type="NCBI Taxonomy" id="103831"/>
    <lineage>
        <taxon>Eukaryota</taxon>
        <taxon>Metazoa</taxon>
        <taxon>Ecdysozoa</taxon>
        <taxon>Arthropoda</taxon>
        <taxon>Hexapoda</taxon>
        <taxon>Insecta</taxon>
        <taxon>Pterygota</taxon>
        <taxon>Neoptera</taxon>
        <taxon>Endopterygota</taxon>
        <taxon>Lepidoptera</taxon>
        <taxon>Glossata</taxon>
        <taxon>Ditrysia</taxon>
        <taxon>Noctuoidea</taxon>
        <taxon>Noctuidae</taxon>
        <taxon>Hadeninae</taxon>
        <taxon>Mythimna</taxon>
    </lineage>
</organism>
<keyword id="KW-0903">Direct protein sequencing</keyword>
<keyword id="KW-0646">Protease inhibitor</keyword>
<keyword id="KW-0964">Secreted</keyword>
<keyword id="KW-0722">Serine protease inhibitor</keyword>